<dbReference type="EMBL" id="AE017342">
    <property type="protein sequence ID" value="AAW41758.1"/>
    <property type="molecule type" value="Genomic_DNA"/>
</dbReference>
<dbReference type="RefSeq" id="XP_569065.1">
    <property type="nucleotide sequence ID" value="XM_569065.1"/>
</dbReference>
<dbReference type="SMR" id="P0CN98"/>
<dbReference type="FunCoup" id="P0CN98">
    <property type="interactions" value="182"/>
</dbReference>
<dbReference type="STRING" id="214684.P0CN98"/>
<dbReference type="PaxDb" id="214684-P0CN98"/>
<dbReference type="EnsemblFungi" id="AAW41758">
    <property type="protein sequence ID" value="AAW41758"/>
    <property type="gene ID" value="CNB00550"/>
</dbReference>
<dbReference type="GeneID" id="3255640"/>
<dbReference type="KEGG" id="cne:CNB00550"/>
<dbReference type="VEuPathDB" id="FungiDB:CNB00550"/>
<dbReference type="eggNOG" id="KOG1756">
    <property type="taxonomic scope" value="Eukaryota"/>
</dbReference>
<dbReference type="HOGENOM" id="CLU_062828_3_1_1"/>
<dbReference type="InParanoid" id="P0CN98"/>
<dbReference type="OMA" id="ANEMFIN"/>
<dbReference type="OrthoDB" id="9421954at2759"/>
<dbReference type="Proteomes" id="UP000002149">
    <property type="component" value="Chromosome 2"/>
</dbReference>
<dbReference type="GO" id="GO:0000786">
    <property type="term" value="C:nucleosome"/>
    <property type="evidence" value="ECO:0000318"/>
    <property type="project" value="GO_Central"/>
</dbReference>
<dbReference type="GO" id="GO:0005634">
    <property type="term" value="C:nucleus"/>
    <property type="evidence" value="ECO:0000318"/>
    <property type="project" value="GO_Central"/>
</dbReference>
<dbReference type="GO" id="GO:0003677">
    <property type="term" value="F:DNA binding"/>
    <property type="evidence" value="ECO:0007669"/>
    <property type="project" value="UniProtKB-KW"/>
</dbReference>
<dbReference type="GO" id="GO:0046982">
    <property type="term" value="F:protein heterodimerization activity"/>
    <property type="evidence" value="ECO:0007669"/>
    <property type="project" value="InterPro"/>
</dbReference>
<dbReference type="GO" id="GO:0030527">
    <property type="term" value="F:structural constituent of chromatin"/>
    <property type="evidence" value="ECO:0000318"/>
    <property type="project" value="GO_Central"/>
</dbReference>
<dbReference type="GO" id="GO:0006281">
    <property type="term" value="P:DNA repair"/>
    <property type="evidence" value="ECO:0007669"/>
    <property type="project" value="UniProtKB-KW"/>
</dbReference>
<dbReference type="GO" id="GO:0031507">
    <property type="term" value="P:heterochromatin formation"/>
    <property type="evidence" value="ECO:0000318"/>
    <property type="project" value="GO_Central"/>
</dbReference>
<dbReference type="CDD" id="cd00074">
    <property type="entry name" value="HFD_H2A"/>
    <property type="match status" value="1"/>
</dbReference>
<dbReference type="FunFam" id="1.10.20.10:FF:000008">
    <property type="entry name" value="Histone H2A"/>
    <property type="match status" value="1"/>
</dbReference>
<dbReference type="Gene3D" id="1.10.20.10">
    <property type="entry name" value="Histone, subunit A"/>
    <property type="match status" value="1"/>
</dbReference>
<dbReference type="InterPro" id="IPR009072">
    <property type="entry name" value="Histone-fold"/>
</dbReference>
<dbReference type="InterPro" id="IPR002119">
    <property type="entry name" value="Histone_H2A"/>
</dbReference>
<dbReference type="InterPro" id="IPR007125">
    <property type="entry name" value="Histone_H2A/H2B/H3"/>
</dbReference>
<dbReference type="InterPro" id="IPR032454">
    <property type="entry name" value="Histone_H2A_C"/>
</dbReference>
<dbReference type="InterPro" id="IPR032458">
    <property type="entry name" value="Histone_H2A_CS"/>
</dbReference>
<dbReference type="PANTHER" id="PTHR23430">
    <property type="entry name" value="HISTONE H2A"/>
    <property type="match status" value="1"/>
</dbReference>
<dbReference type="Pfam" id="PF00125">
    <property type="entry name" value="Histone"/>
    <property type="match status" value="1"/>
</dbReference>
<dbReference type="Pfam" id="PF16211">
    <property type="entry name" value="Histone_H2A_C"/>
    <property type="match status" value="1"/>
</dbReference>
<dbReference type="PRINTS" id="PR00620">
    <property type="entry name" value="HISTONEH2A"/>
</dbReference>
<dbReference type="SMART" id="SM00414">
    <property type="entry name" value="H2A"/>
    <property type="match status" value="1"/>
</dbReference>
<dbReference type="SUPFAM" id="SSF47113">
    <property type="entry name" value="Histone-fold"/>
    <property type="match status" value="1"/>
</dbReference>
<dbReference type="PROSITE" id="PS00046">
    <property type="entry name" value="HISTONE_H2A"/>
    <property type="match status" value="1"/>
</dbReference>
<reference key="1">
    <citation type="journal article" date="2005" name="Science">
        <title>The genome of the basidiomycetous yeast and human pathogen Cryptococcus neoformans.</title>
        <authorList>
            <person name="Loftus B.J."/>
            <person name="Fung E."/>
            <person name="Roncaglia P."/>
            <person name="Rowley D."/>
            <person name="Amedeo P."/>
            <person name="Bruno D."/>
            <person name="Vamathevan J."/>
            <person name="Miranda M."/>
            <person name="Anderson I.J."/>
            <person name="Fraser J.A."/>
            <person name="Allen J.E."/>
            <person name="Bosdet I.E."/>
            <person name="Brent M.R."/>
            <person name="Chiu R."/>
            <person name="Doering T.L."/>
            <person name="Donlin M.J."/>
            <person name="D'Souza C.A."/>
            <person name="Fox D.S."/>
            <person name="Grinberg V."/>
            <person name="Fu J."/>
            <person name="Fukushima M."/>
            <person name="Haas B.J."/>
            <person name="Huang J.C."/>
            <person name="Janbon G."/>
            <person name="Jones S.J.M."/>
            <person name="Koo H.L."/>
            <person name="Krzywinski M.I."/>
            <person name="Kwon-Chung K.J."/>
            <person name="Lengeler K.B."/>
            <person name="Maiti R."/>
            <person name="Marra M.A."/>
            <person name="Marra R.E."/>
            <person name="Mathewson C.A."/>
            <person name="Mitchell T.G."/>
            <person name="Pertea M."/>
            <person name="Riggs F.R."/>
            <person name="Salzberg S.L."/>
            <person name="Schein J.E."/>
            <person name="Shvartsbeyn A."/>
            <person name="Shin H."/>
            <person name="Shumway M."/>
            <person name="Specht C.A."/>
            <person name="Suh B.B."/>
            <person name="Tenney A."/>
            <person name="Utterback T.R."/>
            <person name="Wickes B.L."/>
            <person name="Wortman J.R."/>
            <person name="Wye N.H."/>
            <person name="Kronstad J.W."/>
            <person name="Lodge J.K."/>
            <person name="Heitman J."/>
            <person name="Davis R.W."/>
            <person name="Fraser C.M."/>
            <person name="Hyman R.W."/>
        </authorList>
    </citation>
    <scope>NUCLEOTIDE SEQUENCE [LARGE SCALE GENOMIC DNA]</scope>
    <source>
        <strain>JEC21 / ATCC MYA-565</strain>
    </source>
</reference>
<evidence type="ECO:0000250" key="1"/>
<evidence type="ECO:0000256" key="2">
    <source>
        <dbReference type="SAM" id="MobiDB-lite"/>
    </source>
</evidence>
<evidence type="ECO:0000305" key="3"/>
<feature type="initiator methionine" description="Removed" evidence="1">
    <location>
        <position position="1"/>
    </location>
</feature>
<feature type="chain" id="PRO_0000228727" description="Histone H2A">
    <location>
        <begin position="2"/>
        <end position="131"/>
    </location>
</feature>
<feature type="region of interest" description="Disordered" evidence="2">
    <location>
        <begin position="1"/>
        <end position="24"/>
    </location>
</feature>
<feature type="short sequence motif" description="[ST]-Q motif">
    <location>
        <begin position="128"/>
        <end position="129"/>
    </location>
</feature>
<feature type="compositionally biased region" description="Low complexity" evidence="2">
    <location>
        <begin position="8"/>
        <end position="23"/>
    </location>
</feature>
<feature type="modified residue" description="N6-acetyllysine" evidence="1">
    <location>
        <position position="6"/>
    </location>
</feature>
<feature type="modified residue" description="N6-acetyllysine" evidence="1">
    <location>
        <position position="8"/>
    </location>
</feature>
<feature type="modified residue" description="N5-methylglutamine" evidence="1">
    <location>
        <position position="105"/>
    </location>
</feature>
<feature type="modified residue" description="Phosphoserine" evidence="1">
    <location>
        <position position="128"/>
    </location>
</feature>
<gene>
    <name type="primary">HTA1</name>
    <name type="ordered locus">CNB00550</name>
</gene>
<protein>
    <recommendedName>
        <fullName>Histone H2A</fullName>
    </recommendedName>
</protein>
<proteinExistence type="inferred from homology"/>
<keyword id="KW-0007">Acetylation</keyword>
<keyword id="KW-0158">Chromosome</keyword>
<keyword id="KW-0227">DNA damage</keyword>
<keyword id="KW-0234">DNA repair</keyword>
<keyword id="KW-0238">DNA-binding</keyword>
<keyword id="KW-0488">Methylation</keyword>
<keyword id="KW-0544">Nucleosome core</keyword>
<keyword id="KW-0539">Nucleus</keyword>
<keyword id="KW-0597">Phosphoprotein</keyword>
<keyword id="KW-1185">Reference proteome</keyword>
<accession>P0CN98</accession>
<accession>Q55X47</accession>
<accession>Q5KMT5</accession>
<organism>
    <name type="scientific">Cryptococcus neoformans var. neoformans serotype D (strain JEC21 / ATCC MYA-565)</name>
    <name type="common">Filobasidiella neoformans</name>
    <dbReference type="NCBI Taxonomy" id="214684"/>
    <lineage>
        <taxon>Eukaryota</taxon>
        <taxon>Fungi</taxon>
        <taxon>Dikarya</taxon>
        <taxon>Basidiomycota</taxon>
        <taxon>Agaricomycotina</taxon>
        <taxon>Tremellomycetes</taxon>
        <taxon>Tremellales</taxon>
        <taxon>Cryptococcaceae</taxon>
        <taxon>Cryptococcus</taxon>
        <taxon>Cryptococcus neoformans species complex</taxon>
    </lineage>
</organism>
<name>H2A_CRYNJ</name>
<sequence length="131" mass="13914">MSSGGKGKASSETKSSSRSSKAGLQFPVGRIHRLLKKGNYAQRIGSGAPVYLAAVLEYLAAEILELAGNAARDNKKSRIVPRHLQLAVRNDEELNKLLGSVVISQGGVLPHIMAELLPVKTKGKAKASQEV</sequence>
<comment type="function">
    <text>Core component of nucleosome which plays a central role in DNA double strand break (DSB) repair. Nucleosomes wrap and compact DNA into chromatin, limiting DNA accessibility to the cellular machineries which require DNA as a template. Histones thereby play a central role in transcription regulation, DNA repair, DNA replication and chromosomal stability. DNA accessibility is regulated via a complex set of post-translational modifications of histones, also called histone code, and nucleosome remodeling.</text>
</comment>
<comment type="subunit">
    <text>The nucleosome is a histone octamer containing two molecules each of H2A, H2B, H3 and H4 assembled in one H3-H4 heterotetramer and two H2A-H2B heterodimers. The octamer wraps approximately 147 bp of DNA.</text>
</comment>
<comment type="subcellular location">
    <subcellularLocation>
        <location evidence="1">Nucleus</location>
    </subcellularLocation>
    <subcellularLocation>
        <location evidence="1">Chromosome</location>
    </subcellularLocation>
</comment>
<comment type="domain">
    <text>The [ST]-Q motif constitutes a recognition sequence for kinases from the PI3/PI4-kinase family.</text>
</comment>
<comment type="PTM">
    <text evidence="1">Phosphorylated to form H2AS128ph (gamma-H2A) in response to DNA double-strand breaks (DSBs) generated by exogenous genotoxic agents and by stalled replication forks. Phosphorylation is dependent on the DNA damage checkpoint kinases MEC1/ATR and TEL1/ATM, spreads on either side of a detected DSB site and may mark the surrounding chromatin for recruitment of proteins required for DNA damage signaling and repair. Gamma-H2A is removed from the DNA prior to the strand invasion-primer extension step of the repair process and subsequently dephosphorylated. Dephosphorylation is necessary for efficient recovery from the DNA damage checkpoint (By similarity).</text>
</comment>
<comment type="PTM">
    <text evidence="1">Acetylated by ESA1 to form H2AK4ac and H2AK7ac.</text>
</comment>
<comment type="miscellaneous">
    <text evidence="3">In contrast to vertebrates and insects, its C-terminus is not monoubiquitinated.</text>
</comment>
<comment type="similarity">
    <text evidence="3">Belongs to the histone H2A family.</text>
</comment>
<comment type="caution">
    <text evidence="3">To ensure consistency between histone entries, we follow the 'Brno' nomenclature for histone modifications, with positions referring to those used in the literature for the 'closest' model organism. Due to slight variations in histone sequences between organisms and to the presence of initiator methionine in UniProtKB/Swiss-Prot sequences, the actual positions of modified amino acids in the sequence generally differ. In this entry the following conventions are used: H2AK4ac = acetylated Lys-6; H2AK7ac = acetylated Lys-8; H2AS128ph = phosphorylated Ser-128.</text>
</comment>